<gene>
    <name evidence="1" type="primary">atpG</name>
    <name type="ordered locus">FN0359</name>
</gene>
<sequence length="282" mass="32132">MPGMKEIKSRIKSVQSTRQITNAMEIVSTTKFKRYSKLVTESRPYEESMRKILGNIASGVKNEGHPLFDGRKEVKSIAIIVITSDRGLCGSFNSSTLKELEKLVEKNKNKNITIIPFGRKAIDFITKRNYEFSESFSKISPDEMNKIAGEISEEVVEKYNNHIYDEVYVIYNKFISALRYDLTCERIIPITRPEVELNSEYIFEPSTEYILSALLPRFINLQIYQAILNNTASEHSARKNSMSSATDNADEMIKTLNIKYNRNRQSAITQEITEIVGGASAL</sequence>
<evidence type="ECO:0000255" key="1">
    <source>
        <dbReference type="HAMAP-Rule" id="MF_00815"/>
    </source>
</evidence>
<organism>
    <name type="scientific">Fusobacterium nucleatum subsp. nucleatum (strain ATCC 25586 / DSM 15643 / BCRC 10681 / CIP 101130 / JCM 8532 / KCTC 2640 / LMG 13131 / VPI 4355)</name>
    <dbReference type="NCBI Taxonomy" id="190304"/>
    <lineage>
        <taxon>Bacteria</taxon>
        <taxon>Fusobacteriati</taxon>
        <taxon>Fusobacteriota</taxon>
        <taxon>Fusobacteriia</taxon>
        <taxon>Fusobacteriales</taxon>
        <taxon>Fusobacteriaceae</taxon>
        <taxon>Fusobacterium</taxon>
    </lineage>
</organism>
<name>ATPG_FUSNN</name>
<proteinExistence type="evidence at protein level"/>
<comment type="function">
    <text evidence="1">Produces ATP from ADP in the presence of a proton gradient across the membrane. The gamma chain is believed to be important in regulating ATPase activity and the flow of protons through the CF(0) complex.</text>
</comment>
<comment type="subunit">
    <text evidence="1">F-type ATPases have 2 components, CF(1) - the catalytic core - and CF(0) - the membrane proton channel. CF(1) has five subunits: alpha(3), beta(3), gamma(1), delta(1), epsilon(1). CF(0) has three main subunits: a, b and c.</text>
</comment>
<comment type="subcellular location">
    <subcellularLocation>
        <location evidence="1">Cell inner membrane</location>
        <topology evidence="1">Peripheral membrane protein</topology>
    </subcellularLocation>
</comment>
<comment type="similarity">
    <text evidence="1">Belongs to the ATPase gamma chain family.</text>
</comment>
<keyword id="KW-0002">3D-structure</keyword>
<keyword id="KW-0066">ATP synthesis</keyword>
<keyword id="KW-0997">Cell inner membrane</keyword>
<keyword id="KW-1003">Cell membrane</keyword>
<keyword id="KW-0139">CF(1)</keyword>
<keyword id="KW-0375">Hydrogen ion transport</keyword>
<keyword id="KW-0406">Ion transport</keyword>
<keyword id="KW-0472">Membrane</keyword>
<keyword id="KW-1185">Reference proteome</keyword>
<keyword id="KW-0813">Transport</keyword>
<feature type="chain" id="PRO_0000073286" description="ATP synthase gamma chain">
    <location>
        <begin position="1"/>
        <end position="282"/>
    </location>
</feature>
<accession>Q8RGE1</accession>
<reference key="1">
    <citation type="journal article" date="2002" name="J. Bacteriol.">
        <title>Genome sequence and analysis of the oral bacterium Fusobacterium nucleatum strain ATCC 25586.</title>
        <authorList>
            <person name="Kapatral V."/>
            <person name="Anderson I."/>
            <person name="Ivanova N."/>
            <person name="Reznik G."/>
            <person name="Los T."/>
            <person name="Lykidis A."/>
            <person name="Bhattacharyya A."/>
            <person name="Bartman A."/>
            <person name="Gardner W."/>
            <person name="Grechkin G."/>
            <person name="Zhu L."/>
            <person name="Vasieva O."/>
            <person name="Chu L."/>
            <person name="Kogan Y."/>
            <person name="Chaga O."/>
            <person name="Goltsman E."/>
            <person name="Bernal A."/>
            <person name="Larsen N."/>
            <person name="D'Souza M."/>
            <person name="Walunas T."/>
            <person name="Pusch G."/>
            <person name="Haselkorn R."/>
            <person name="Fonstein M."/>
            <person name="Kyrpides N.C."/>
            <person name="Overbeek R."/>
        </authorList>
    </citation>
    <scope>NUCLEOTIDE SEQUENCE [LARGE SCALE GENOMIC DNA]</scope>
    <source>
        <strain>ATCC 25586 / DSM 15643 / BCRC 10681 / CIP 101130 / JCM 8532 / KCTC 2640 / LMG 13131 / VPI 4355</strain>
    </source>
</reference>
<dbReference type="EMBL" id="AE009951">
    <property type="protein sequence ID" value="AAL94562.1"/>
    <property type="molecule type" value="Genomic_DNA"/>
</dbReference>
<dbReference type="RefSeq" id="NP_603263.1">
    <property type="nucleotide sequence ID" value="NC_003454.1"/>
</dbReference>
<dbReference type="RefSeq" id="WP_011016336.1">
    <property type="nucleotide sequence ID" value="NZ_CP028101.1"/>
</dbReference>
<dbReference type="PDB" id="6Q45">
    <property type="method" value="X-ray"/>
    <property type="resolution" value="3.60 A"/>
    <property type="chains" value="G/O=1-282"/>
</dbReference>
<dbReference type="PDBsum" id="6Q45"/>
<dbReference type="SMR" id="Q8RGE1"/>
<dbReference type="DIP" id="DIP-60176N"/>
<dbReference type="FunCoup" id="Q8RGE1">
    <property type="interactions" value="354"/>
</dbReference>
<dbReference type="IntAct" id="Q8RGE1">
    <property type="interactions" value="1"/>
</dbReference>
<dbReference type="STRING" id="190304.FN0359"/>
<dbReference type="PaxDb" id="190304-FN0359"/>
<dbReference type="EnsemblBacteria" id="AAL94562">
    <property type="protein sequence ID" value="AAL94562"/>
    <property type="gene ID" value="FN0359"/>
</dbReference>
<dbReference type="GeneID" id="79783368"/>
<dbReference type="KEGG" id="fnu:FN0359"/>
<dbReference type="PATRIC" id="fig|190304.8.peg.936"/>
<dbReference type="eggNOG" id="COG0224">
    <property type="taxonomic scope" value="Bacteria"/>
</dbReference>
<dbReference type="HOGENOM" id="CLU_050669_0_1_0"/>
<dbReference type="InParanoid" id="Q8RGE1"/>
<dbReference type="BioCyc" id="FNUC190304:G1FZS-956-MONOMER"/>
<dbReference type="Proteomes" id="UP000002521">
    <property type="component" value="Chromosome"/>
</dbReference>
<dbReference type="GO" id="GO:0005886">
    <property type="term" value="C:plasma membrane"/>
    <property type="evidence" value="ECO:0007669"/>
    <property type="project" value="UniProtKB-SubCell"/>
</dbReference>
<dbReference type="GO" id="GO:0045259">
    <property type="term" value="C:proton-transporting ATP synthase complex"/>
    <property type="evidence" value="ECO:0007669"/>
    <property type="project" value="UniProtKB-KW"/>
</dbReference>
<dbReference type="GO" id="GO:0005524">
    <property type="term" value="F:ATP binding"/>
    <property type="evidence" value="ECO:0007669"/>
    <property type="project" value="UniProtKB-UniRule"/>
</dbReference>
<dbReference type="GO" id="GO:0046933">
    <property type="term" value="F:proton-transporting ATP synthase activity, rotational mechanism"/>
    <property type="evidence" value="ECO:0007669"/>
    <property type="project" value="UniProtKB-UniRule"/>
</dbReference>
<dbReference type="GO" id="GO:0015986">
    <property type="term" value="P:proton motive force-driven ATP synthesis"/>
    <property type="evidence" value="ECO:0000318"/>
    <property type="project" value="GO_Central"/>
</dbReference>
<dbReference type="GO" id="GO:0042777">
    <property type="term" value="P:proton motive force-driven plasma membrane ATP synthesis"/>
    <property type="evidence" value="ECO:0007669"/>
    <property type="project" value="UniProtKB-UniRule"/>
</dbReference>
<dbReference type="CDD" id="cd12151">
    <property type="entry name" value="F1-ATPase_gamma"/>
    <property type="match status" value="1"/>
</dbReference>
<dbReference type="Gene3D" id="3.40.1380.10">
    <property type="match status" value="1"/>
</dbReference>
<dbReference type="Gene3D" id="1.10.287.80">
    <property type="entry name" value="ATP synthase, gamma subunit, helix hairpin domain"/>
    <property type="match status" value="1"/>
</dbReference>
<dbReference type="HAMAP" id="MF_00815">
    <property type="entry name" value="ATP_synth_gamma_bact"/>
    <property type="match status" value="1"/>
</dbReference>
<dbReference type="InterPro" id="IPR035968">
    <property type="entry name" value="ATP_synth_F1_ATPase_gsu"/>
</dbReference>
<dbReference type="InterPro" id="IPR000131">
    <property type="entry name" value="ATP_synth_F1_gsu"/>
</dbReference>
<dbReference type="InterPro" id="IPR023632">
    <property type="entry name" value="ATP_synth_F1_gsu_CS"/>
</dbReference>
<dbReference type="NCBIfam" id="TIGR01146">
    <property type="entry name" value="ATPsyn_F1gamma"/>
    <property type="match status" value="1"/>
</dbReference>
<dbReference type="PANTHER" id="PTHR11693">
    <property type="entry name" value="ATP SYNTHASE GAMMA CHAIN"/>
    <property type="match status" value="1"/>
</dbReference>
<dbReference type="PANTHER" id="PTHR11693:SF22">
    <property type="entry name" value="ATP SYNTHASE SUBUNIT GAMMA, MITOCHONDRIAL"/>
    <property type="match status" value="1"/>
</dbReference>
<dbReference type="Pfam" id="PF00231">
    <property type="entry name" value="ATP-synt"/>
    <property type="match status" value="1"/>
</dbReference>
<dbReference type="PRINTS" id="PR00126">
    <property type="entry name" value="ATPASEGAMMA"/>
</dbReference>
<dbReference type="SUPFAM" id="SSF52943">
    <property type="entry name" value="ATP synthase (F1-ATPase), gamma subunit"/>
    <property type="match status" value="1"/>
</dbReference>
<dbReference type="PROSITE" id="PS00153">
    <property type="entry name" value="ATPASE_GAMMA"/>
    <property type="match status" value="1"/>
</dbReference>
<protein>
    <recommendedName>
        <fullName evidence="1">ATP synthase gamma chain</fullName>
    </recommendedName>
    <alternativeName>
        <fullName evidence="1">ATP synthase F1 sector gamma subunit</fullName>
    </alternativeName>
    <alternativeName>
        <fullName evidence="1">F-ATPase gamma subunit</fullName>
    </alternativeName>
</protein>